<comment type="function">
    <text evidence="2 3">Participates in mitochondrial biogenesis and stress response.</text>
</comment>
<comment type="subcellular location">
    <subcellularLocation>
        <location evidence="4">Mitochondrion</location>
    </subcellularLocation>
</comment>
<comment type="induction">
    <text evidence="3">Expression is induced in the late growth phase and is negatively controlled by the cAMP-dependent protein kinase A (PKA).</text>
</comment>
<comment type="similarity">
    <text evidence="4">Belongs to the ISF1/MBR1 family.</text>
</comment>
<gene>
    <name type="primary">MBR1</name>
    <name type="ordered locus">YKL093W</name>
    <name type="ORF">YKL440</name>
</gene>
<dbReference type="EMBL" id="M63309">
    <property type="protein sequence ID" value="AAA88725.1"/>
    <property type="molecule type" value="Genomic_DNA"/>
</dbReference>
<dbReference type="EMBL" id="X71133">
    <property type="protein sequence ID" value="CAA50464.1"/>
    <property type="molecule type" value="Genomic_DNA"/>
</dbReference>
<dbReference type="EMBL" id="Z28093">
    <property type="protein sequence ID" value="CAA81931.1"/>
    <property type="molecule type" value="Genomic_DNA"/>
</dbReference>
<dbReference type="EMBL" id="X75561">
    <property type="protein sequence ID" value="CAA53240.1"/>
    <property type="molecule type" value="Genomic_DNA"/>
</dbReference>
<dbReference type="EMBL" id="AY899251">
    <property type="protein sequence ID" value="AAX83936.1"/>
    <property type="molecule type" value="mRNA"/>
</dbReference>
<dbReference type="EMBL" id="BK006944">
    <property type="protein sequence ID" value="DAA09065.1"/>
    <property type="molecule type" value="Genomic_DNA"/>
</dbReference>
<dbReference type="PIR" id="S37920">
    <property type="entry name" value="S37920"/>
</dbReference>
<dbReference type="RefSeq" id="NP_012830.1">
    <property type="nucleotide sequence ID" value="NM_001179659.1"/>
</dbReference>
<dbReference type="BioGRID" id="34040">
    <property type="interactions" value="128"/>
</dbReference>
<dbReference type="DIP" id="DIP-4119N"/>
<dbReference type="FunCoup" id="P23493">
    <property type="interactions" value="55"/>
</dbReference>
<dbReference type="IntAct" id="P23493">
    <property type="interactions" value="1"/>
</dbReference>
<dbReference type="MINT" id="P23493"/>
<dbReference type="STRING" id="4932.YKL093W"/>
<dbReference type="GlyGen" id="P23493">
    <property type="glycosylation" value="3 sites, 1 O-linked glycan (3 sites)"/>
</dbReference>
<dbReference type="iPTMnet" id="P23493"/>
<dbReference type="PaxDb" id="4932-YKL093W"/>
<dbReference type="PeptideAtlas" id="P23493"/>
<dbReference type="EnsemblFungi" id="YKL093W_mRNA">
    <property type="protein sequence ID" value="YKL093W"/>
    <property type="gene ID" value="YKL093W"/>
</dbReference>
<dbReference type="GeneID" id="853769"/>
<dbReference type="KEGG" id="sce:YKL093W"/>
<dbReference type="AGR" id="SGD:S000001576"/>
<dbReference type="SGD" id="S000001576">
    <property type="gene designation" value="MBR1"/>
</dbReference>
<dbReference type="VEuPathDB" id="FungiDB:YKL093W"/>
<dbReference type="HOGENOM" id="CLU_778649_0_0_1"/>
<dbReference type="InParanoid" id="P23493"/>
<dbReference type="OMA" id="NXRSSSS"/>
<dbReference type="OrthoDB" id="4061804at2759"/>
<dbReference type="BioCyc" id="YEAST:G3O-31884-MONOMER"/>
<dbReference type="BioGRID-ORCS" id="853769">
    <property type="hits" value="2 hits in 10 CRISPR screens"/>
</dbReference>
<dbReference type="PRO" id="PR:P23493"/>
<dbReference type="Proteomes" id="UP000002311">
    <property type="component" value="Chromosome XI"/>
</dbReference>
<dbReference type="RNAct" id="P23493">
    <property type="molecule type" value="protein"/>
</dbReference>
<dbReference type="GO" id="GO:0005739">
    <property type="term" value="C:mitochondrion"/>
    <property type="evidence" value="ECO:0007669"/>
    <property type="project" value="UniProtKB-SubCell"/>
</dbReference>
<dbReference type="GO" id="GO:0009060">
    <property type="term" value="P:aerobic respiration"/>
    <property type="evidence" value="ECO:0000315"/>
    <property type="project" value="SGD"/>
</dbReference>
<dbReference type="InterPro" id="IPR031443">
    <property type="entry name" value="Mbr1"/>
</dbReference>
<dbReference type="Pfam" id="PF17058">
    <property type="entry name" value="MBR1"/>
    <property type="match status" value="1"/>
</dbReference>
<keyword id="KW-0496">Mitochondrion</keyword>
<keyword id="KW-0597">Phosphoprotein</keyword>
<keyword id="KW-1185">Reference proteome</keyword>
<keyword id="KW-0346">Stress response</keyword>
<feature type="chain" id="PRO_0000096271" description="Mitochondrial biogenesis regulation protein 1">
    <location>
        <begin position="1"/>
        <end position="339"/>
    </location>
</feature>
<feature type="region of interest" description="Disordered" evidence="1">
    <location>
        <begin position="1"/>
        <end position="20"/>
    </location>
</feature>
<feature type="region of interest" description="Disordered" evidence="1">
    <location>
        <begin position="94"/>
        <end position="156"/>
    </location>
</feature>
<feature type="region of interest" description="Disordered" evidence="1">
    <location>
        <begin position="198"/>
        <end position="224"/>
    </location>
</feature>
<feature type="region of interest" description="Disordered" evidence="1">
    <location>
        <begin position="258"/>
        <end position="325"/>
    </location>
</feature>
<feature type="compositionally biased region" description="Polar residues" evidence="1">
    <location>
        <begin position="99"/>
        <end position="115"/>
    </location>
</feature>
<feature type="compositionally biased region" description="Low complexity" evidence="1">
    <location>
        <begin position="136"/>
        <end position="149"/>
    </location>
</feature>
<feature type="compositionally biased region" description="Polar residues" evidence="1">
    <location>
        <begin position="198"/>
        <end position="213"/>
    </location>
</feature>
<feature type="compositionally biased region" description="Low complexity" evidence="1">
    <location>
        <begin position="214"/>
        <end position="224"/>
    </location>
</feature>
<feature type="compositionally biased region" description="Low complexity" evidence="1">
    <location>
        <begin position="279"/>
        <end position="293"/>
    </location>
</feature>
<feature type="compositionally biased region" description="Low complexity" evidence="1">
    <location>
        <begin position="302"/>
        <end position="314"/>
    </location>
</feature>
<feature type="modified residue" description="Phosphothreonine" evidence="5">
    <location>
        <position position="159"/>
    </location>
</feature>
<feature type="modified residue" description="Phosphoserine" evidence="5">
    <location>
        <position position="177"/>
    </location>
</feature>
<feature type="modified residue" description="Phosphoserine" evidence="5">
    <location>
        <position position="224"/>
    </location>
</feature>
<feature type="modified residue" description="Phosphoserine" evidence="5">
    <location>
        <position position="227"/>
    </location>
</feature>
<feature type="sequence conflict" description="In Ref. 1; AAA88725." evidence="4" ref="1">
    <original>A</original>
    <variation>G</variation>
    <location>
        <position position="88"/>
    </location>
</feature>
<feature type="sequence conflict" description="In Ref. 1; AAA88725." evidence="4" ref="1">
    <original>G</original>
    <variation>R</variation>
    <location>
        <position position="168"/>
    </location>
</feature>
<feature type="sequence conflict" description="In Ref. 1; AAA88725." evidence="4" ref="1">
    <original>S</original>
    <variation>T</variation>
    <location>
        <position position="206"/>
    </location>
</feature>
<feature type="sequence conflict" description="In Ref. 1; AAA88725." evidence="4" ref="1">
    <original>G</original>
    <variation>E</variation>
    <location>
        <position position="245"/>
    </location>
</feature>
<proteinExistence type="evidence at protein level"/>
<reference key="1">
    <citation type="journal article" date="1994" name="Mol. Gen. Genet.">
        <title>MBR1 and MBR3, two related yeast genes that can suppress the growth defect of hap2, hap3 and hap4 mutants.</title>
        <authorList>
            <person name="Daignan-Fornier B."/>
            <person name="Nguyen C.C."/>
            <person name="Reisdorf P."/>
            <person name="Lemeignan B."/>
            <person name="Bolotin-Fukuhara M."/>
        </authorList>
    </citation>
    <scope>NUCLEOTIDE SEQUENCE [GENOMIC DNA]</scope>
    <scope>FUNCTION</scope>
    <source>
        <strain>R100</strain>
    </source>
</reference>
<reference key="2">
    <citation type="journal article" date="1993" name="Yeast">
        <title>DNA sequence analysis of a 17 kb fragment of yeast chromosome XI physically localizes the MRB1 gene and reveals eight new open reading frames, including a homologue of the KIN1/KIN2 and SNF1 protein kinases.</title>
        <authorList>
            <person name="Pallier C."/>
            <person name="Valens M."/>
            <person name="Puzos V."/>
            <person name="Fukuhara H."/>
            <person name="Cheret G."/>
            <person name="Sor F."/>
            <person name="Bolotin-Fukuhara M."/>
        </authorList>
    </citation>
    <scope>NUCLEOTIDE SEQUENCE [GENOMIC DNA]</scope>
    <source>
        <strain>ATCC 204508 / S288c</strain>
    </source>
</reference>
<reference key="3">
    <citation type="journal article" date="1994" name="Nature">
        <title>Complete DNA sequence of yeast chromosome XI.</title>
        <authorList>
            <person name="Dujon B."/>
            <person name="Alexandraki D."/>
            <person name="Andre B."/>
            <person name="Ansorge W."/>
            <person name="Baladron V."/>
            <person name="Ballesta J.P.G."/>
            <person name="Banrevi A."/>
            <person name="Bolle P.-A."/>
            <person name="Bolotin-Fukuhara M."/>
            <person name="Bossier P."/>
            <person name="Bou G."/>
            <person name="Boyer J."/>
            <person name="Buitrago M.J."/>
            <person name="Cheret G."/>
            <person name="Colleaux L."/>
            <person name="Daignan-Fornier B."/>
            <person name="del Rey F."/>
            <person name="Dion C."/>
            <person name="Domdey H."/>
            <person name="Duesterhoeft A."/>
            <person name="Duesterhus S."/>
            <person name="Entian K.-D."/>
            <person name="Erfle H."/>
            <person name="Esteban P.F."/>
            <person name="Feldmann H."/>
            <person name="Fernandes L."/>
            <person name="Fobo G.M."/>
            <person name="Fritz C."/>
            <person name="Fukuhara H."/>
            <person name="Gabel C."/>
            <person name="Gaillon L."/>
            <person name="Garcia-Cantalejo J.M."/>
            <person name="Garcia-Ramirez J.J."/>
            <person name="Gent M.E."/>
            <person name="Ghazvini M."/>
            <person name="Goffeau A."/>
            <person name="Gonzalez A."/>
            <person name="Grothues D."/>
            <person name="Guerreiro P."/>
            <person name="Hegemann J.H."/>
            <person name="Hewitt N."/>
            <person name="Hilger F."/>
            <person name="Hollenberg C.P."/>
            <person name="Horaitis O."/>
            <person name="Indge K.J."/>
            <person name="Jacquier A."/>
            <person name="James C.M."/>
            <person name="Jauniaux J.-C."/>
            <person name="Jimenez A."/>
            <person name="Keuchel H."/>
            <person name="Kirchrath L."/>
            <person name="Kleine K."/>
            <person name="Koetter P."/>
            <person name="Legrain P."/>
            <person name="Liebl S."/>
            <person name="Louis E.J."/>
            <person name="Maia e Silva A."/>
            <person name="Marck C."/>
            <person name="Monnier A.-L."/>
            <person name="Moestl D."/>
            <person name="Mueller S."/>
            <person name="Obermaier B."/>
            <person name="Oliver S.G."/>
            <person name="Pallier C."/>
            <person name="Pascolo S."/>
            <person name="Pfeiffer F."/>
            <person name="Philippsen P."/>
            <person name="Planta R.J."/>
            <person name="Pohl F.M."/>
            <person name="Pohl T.M."/>
            <person name="Poehlmann R."/>
            <person name="Portetelle D."/>
            <person name="Purnelle B."/>
            <person name="Puzos V."/>
            <person name="Ramezani Rad M."/>
            <person name="Rasmussen S.W."/>
            <person name="Remacha M.A."/>
            <person name="Revuelta J.L."/>
            <person name="Richard G.-F."/>
            <person name="Rieger M."/>
            <person name="Rodrigues-Pousada C."/>
            <person name="Rose M."/>
            <person name="Rupp T."/>
            <person name="Santos M.A."/>
            <person name="Schwager C."/>
            <person name="Sensen C."/>
            <person name="Skala J."/>
            <person name="Soares H."/>
            <person name="Sor F."/>
            <person name="Stegemann J."/>
            <person name="Tettelin H."/>
            <person name="Thierry A."/>
            <person name="Tzermia M."/>
            <person name="Urrestarazu L.A."/>
            <person name="van Dyck L."/>
            <person name="van Vliet-Reedijk J.C."/>
            <person name="Valens M."/>
            <person name="Vandenbol M."/>
            <person name="Vilela C."/>
            <person name="Vissers S."/>
            <person name="von Wettstein D."/>
            <person name="Voss H."/>
            <person name="Wiemann S."/>
            <person name="Xu G."/>
            <person name="Zimmermann J."/>
            <person name="Haasemann M."/>
            <person name="Becker I."/>
            <person name="Mewes H.-W."/>
        </authorList>
    </citation>
    <scope>NUCLEOTIDE SEQUENCE [LARGE SCALE GENOMIC DNA]</scope>
    <source>
        <strain>ATCC 204508 / S288c</strain>
    </source>
</reference>
<reference key="4">
    <citation type="journal article" date="2014" name="G3 (Bethesda)">
        <title>The reference genome sequence of Saccharomyces cerevisiae: Then and now.</title>
        <authorList>
            <person name="Engel S.R."/>
            <person name="Dietrich F.S."/>
            <person name="Fisk D.G."/>
            <person name="Binkley G."/>
            <person name="Balakrishnan R."/>
            <person name="Costanzo M.C."/>
            <person name="Dwight S.S."/>
            <person name="Hitz B.C."/>
            <person name="Karra K."/>
            <person name="Nash R.S."/>
            <person name="Weng S."/>
            <person name="Wong E.D."/>
            <person name="Lloyd P."/>
            <person name="Skrzypek M.S."/>
            <person name="Miyasato S.R."/>
            <person name="Simison M."/>
            <person name="Cherry J.M."/>
        </authorList>
    </citation>
    <scope>GENOME REANNOTATION</scope>
    <source>
        <strain>ATCC 204508 / S288c</strain>
    </source>
</reference>
<reference key="5">
    <citation type="journal article" date="2005" name="Nucleic Acids Res.">
        <title>Mapping of transcription start sites in Saccharomyces cerevisiae using 5' SAGE.</title>
        <authorList>
            <person name="Zhang Z."/>
            <person name="Dietrich F.S."/>
        </authorList>
    </citation>
    <scope>NUCLEOTIDE SEQUENCE [MRNA] OF 1-98</scope>
    <source>
        <strain>ATCC 208353 / W303-1A</strain>
    </source>
</reference>
<reference key="6">
    <citation type="journal article" date="1994" name="Yeast">
        <title>Sequence analysis of a 3.5 Kb EcoRI fragment from the left arm of Saccharomyces cerevisiae chromosome XI reveals the location of the MBR1 gene and a sequence related to a GTPase-activating protein.</title>
        <authorList>
            <person name="James C.M."/>
            <person name="Gent M.E."/>
            <person name="Oliver S.G."/>
        </authorList>
    </citation>
    <scope>NUCLEOTIDE SEQUENCE [GENOMIC DNA] OF 169-339</scope>
</reference>
<reference key="7">
    <citation type="journal article" date="1991" name="Biochimie">
        <title>Identification of nuclear genes which participate in mitochondrial translation in Saccharomyces cerevisiae.</title>
        <authorList>
            <person name="Valens M."/>
            <person name="Rinaldi T."/>
            <person name="Daignan-Fornier B."/>
            <person name="Bolotin-Fukuhara M."/>
        </authorList>
    </citation>
    <scope>CHARACTERIZATION</scope>
</reference>
<reference key="8">
    <citation type="journal article" date="1997" name="Mol. Gen. Genet.">
        <title>The MBR1 gene from Saccharomyces cerevisiae is activated by and required for growth under sub-optimal conditions.</title>
        <authorList>
            <person name="Reisdorf P."/>
            <person name="Boy-Marcotte E."/>
            <person name="Bolotin-Fukuhara M."/>
        </authorList>
    </citation>
    <scope>FUNCTION</scope>
    <scope>INDUCTION</scope>
</reference>
<reference key="9">
    <citation type="journal article" date="2009" name="Science">
        <title>Global analysis of Cdk1 substrate phosphorylation sites provides insights into evolution.</title>
        <authorList>
            <person name="Holt L.J."/>
            <person name="Tuch B.B."/>
            <person name="Villen J."/>
            <person name="Johnson A.D."/>
            <person name="Gygi S.P."/>
            <person name="Morgan D.O."/>
        </authorList>
    </citation>
    <scope>PHOSPHORYLATION [LARGE SCALE ANALYSIS] AT THR-159; SER-177; SER-224 AND SER-227</scope>
    <scope>IDENTIFICATION BY MASS SPECTROMETRY [LARGE SCALE ANALYSIS]</scope>
</reference>
<name>MBR1_YEAST</name>
<accession>P23493</accession>
<accession>D6VXJ5</accession>
<accession>Q2VQW7</accession>
<evidence type="ECO:0000256" key="1">
    <source>
        <dbReference type="SAM" id="MobiDB-lite"/>
    </source>
</evidence>
<evidence type="ECO:0000269" key="2">
    <source>
    </source>
</evidence>
<evidence type="ECO:0000269" key="3">
    <source>
    </source>
</evidence>
<evidence type="ECO:0000305" key="4"/>
<evidence type="ECO:0007744" key="5">
    <source>
    </source>
</evidence>
<sequence length="339" mass="36935">MRMEKTTDKPLSAGDMNDEYSRGPIDDIDCLNFFERAVQDPCCEACDTEDADEELRAKLSSFNFQPDSSPCNAKCQQTLNPLCKIDEALPAESELAPSRNGSVSEANSDTNSIASTVHDPVDSKYGGMPSLRKAKTTSYFTSSSSNNTTMRNPLKKCNTNINGLLVNGRSSSSSRQSIPELFSGACTKKKNNVLLKSETPNSEFSSNSLQHCNSRSFSLPRSRSRSSAIAIPTHLYGLEKYVSPGLDTLTADPEESIERFSNNRPREISSCCPNDTGDTSSSLSHSNTSSSLNFPLGTNTNQFHQPRQPVQQQQSSKPNFGAGRKKSFIEMSLASSFAG</sequence>
<protein>
    <recommendedName>
        <fullName>Mitochondrial biogenesis regulation protein 1</fullName>
    </recommendedName>
</protein>
<organism>
    <name type="scientific">Saccharomyces cerevisiae (strain ATCC 204508 / S288c)</name>
    <name type="common">Baker's yeast</name>
    <dbReference type="NCBI Taxonomy" id="559292"/>
    <lineage>
        <taxon>Eukaryota</taxon>
        <taxon>Fungi</taxon>
        <taxon>Dikarya</taxon>
        <taxon>Ascomycota</taxon>
        <taxon>Saccharomycotina</taxon>
        <taxon>Saccharomycetes</taxon>
        <taxon>Saccharomycetales</taxon>
        <taxon>Saccharomycetaceae</taxon>
        <taxon>Saccharomyces</taxon>
    </lineage>
</organism>